<name>SODL_VACCW</name>
<feature type="chain" id="PRO_0000164169" description="Cu-Zn superoxide dismutase-like protein OPG175">
    <location>
        <begin position="1"/>
        <end position="125"/>
    </location>
</feature>
<feature type="disulfide bond" evidence="1">
    <location>
        <begin position="52"/>
        <end position="102"/>
    </location>
</feature>
<protein>
    <recommendedName>
        <fullName>Cu-Zn superoxide dismutase-like protein OPG175</fullName>
    </recommendedName>
</protein>
<accession>P26669</accession>
<accession>Q76ZN2</accession>
<keyword id="KW-1015">Disulfide bond</keyword>
<keyword id="KW-1035">Host cytoplasm</keyword>
<keyword id="KW-1185">Reference proteome</keyword>
<keyword id="KW-0946">Virion</keyword>
<reference key="1">
    <citation type="journal article" date="1991" name="J. Virol.">
        <title>Sequence analysis, expression, and deletion of a vaccinia virus gene encoding a homolog of profilin, a eukaryotic actin-binding protein.</title>
        <authorList>
            <person name="Blasco R."/>
            <person name="Cole N.B."/>
            <person name="Moss B."/>
        </authorList>
    </citation>
    <scope>NUCLEOTIDE SEQUENCE [GENOMIC DNA]</scope>
</reference>
<reference key="2">
    <citation type="journal article" date="1991" name="J. Gen. Virol.">
        <title>Nucleotide sequence of 42 kbp of vaccinia virus strain WR from near the right inverted terminal repeat.</title>
        <authorList>
            <person name="Smith G.L."/>
            <person name="Chan Y.S."/>
            <person name="Howard S.T."/>
        </authorList>
    </citation>
    <scope>NUCLEOTIDE SEQUENCE [GENOMIC DNA]</scope>
</reference>
<reference key="3">
    <citation type="submission" date="2003-02" db="EMBL/GenBank/DDBJ databases">
        <title>Sequencing of the coding region of Vaccinia-WR to an average 9-fold redundancy and an error rate of 0.16/10kb.</title>
        <authorList>
            <person name="Esposito J.J."/>
            <person name="Frace A.M."/>
            <person name="Sammons S.A."/>
            <person name="Olsen-Rasmussen M."/>
            <person name="Osborne J."/>
            <person name="Wohlhueter R."/>
        </authorList>
    </citation>
    <scope>NUCLEOTIDE SEQUENCE [LARGE SCALE GENOMIC DNA]</scope>
</reference>
<reference key="4">
    <citation type="journal article" date="2001" name="J. Virol.">
        <title>The vaccinia virus superoxide dismutase-like protein (A45R) is a virion component that is nonessential for virus replication.</title>
        <authorList>
            <person name="Almazan F."/>
            <person name="Tscharke D.C."/>
            <person name="Smith G.L."/>
        </authorList>
    </citation>
    <scope>FUNCTION</scope>
    <scope>SUBCELLULAR LOCATION</scope>
</reference>
<comment type="function">
    <text evidence="2">Superoxide dismutase-like protein with no enzymatic activity.</text>
</comment>
<comment type="subcellular location">
    <subcellularLocation>
        <location evidence="2">Virion</location>
    </subcellularLocation>
    <subcellularLocation>
        <location evidence="2">Host cytoplasm</location>
    </subcellularLocation>
    <text evidence="2">Accumulates predominantly in cytoplasmic viral factories.</text>
</comment>
<comment type="similarity">
    <text evidence="3">Belongs to the Cu-Zn superoxide dismutase family.</text>
</comment>
<organism>
    <name type="scientific">Vaccinia virus (strain Western Reserve)</name>
    <name type="common">VACV</name>
    <name type="synonym">Vaccinia virus (strain WR)</name>
    <dbReference type="NCBI Taxonomy" id="10254"/>
    <lineage>
        <taxon>Viruses</taxon>
        <taxon>Varidnaviria</taxon>
        <taxon>Bamfordvirae</taxon>
        <taxon>Nucleocytoviricota</taxon>
        <taxon>Pokkesviricetes</taxon>
        <taxon>Chitovirales</taxon>
        <taxon>Poxviridae</taxon>
        <taxon>Chordopoxvirinae</taxon>
        <taxon>Orthopoxvirus</taxon>
        <taxon>Vaccinia virus</taxon>
    </lineage>
</organism>
<evidence type="ECO:0000250" key="1"/>
<evidence type="ECO:0000269" key="2">
    <source>
    </source>
</evidence>
<evidence type="ECO:0000305" key="3"/>
<sequence length="125" mass="13663">MAVCIIDHDNIRGVIYFEPVHGKDKVLGSVIGLKSGTYSLIIHRYGDISQGCDSIGSPEIFIGNIFVNRYGVAYVYLDTDVNISTIIGKALSISKNDQRLACGVIGISYINEKIIHFLTINENGV</sequence>
<proteinExistence type="inferred from homology"/>
<gene>
    <name type="primary">OPG175</name>
    <name type="ordered locus">VACWR171</name>
    <name type="ORF">SALF8R</name>
</gene>
<organismHost>
    <name type="scientific">Bos taurus</name>
    <name type="common">Bovine</name>
    <dbReference type="NCBI Taxonomy" id="9913"/>
</organismHost>
<dbReference type="EMBL" id="M72474">
    <property type="protein sequence ID" value="AAA48312.1"/>
    <property type="molecule type" value="Genomic_DNA"/>
</dbReference>
<dbReference type="EMBL" id="D11079">
    <property type="protein sequence ID" value="BAA01819.1"/>
    <property type="molecule type" value="Genomic_DNA"/>
</dbReference>
<dbReference type="EMBL" id="AY243312">
    <property type="protein sequence ID" value="AAO89450.1"/>
    <property type="molecule type" value="Genomic_DNA"/>
</dbReference>
<dbReference type="PIR" id="F40897">
    <property type="entry name" value="DSVZCR"/>
</dbReference>
<dbReference type="SMR" id="P26669"/>
<dbReference type="DIP" id="DIP-2172N"/>
<dbReference type="IntAct" id="P26669">
    <property type="interactions" value="2"/>
</dbReference>
<dbReference type="MINT" id="P26669"/>
<dbReference type="DNASU" id="3707701"/>
<dbReference type="KEGG" id="vg:3707701"/>
<dbReference type="Proteomes" id="UP000000344">
    <property type="component" value="Genome"/>
</dbReference>
<dbReference type="GO" id="GO:0030430">
    <property type="term" value="C:host cell cytoplasm"/>
    <property type="evidence" value="ECO:0007669"/>
    <property type="project" value="UniProtKB-SubCell"/>
</dbReference>
<dbReference type="GO" id="GO:0044423">
    <property type="term" value="C:virion component"/>
    <property type="evidence" value="ECO:0007669"/>
    <property type="project" value="UniProtKB-KW"/>
</dbReference>
<dbReference type="GO" id="GO:0046872">
    <property type="term" value="F:metal ion binding"/>
    <property type="evidence" value="ECO:0007669"/>
    <property type="project" value="InterPro"/>
</dbReference>
<dbReference type="GO" id="GO:0006801">
    <property type="term" value="P:superoxide metabolic process"/>
    <property type="evidence" value="ECO:0007669"/>
    <property type="project" value="InterPro"/>
</dbReference>
<dbReference type="Gene3D" id="2.60.40.200">
    <property type="entry name" value="Superoxide dismutase, copper/zinc binding domain"/>
    <property type="match status" value="1"/>
</dbReference>
<dbReference type="InterPro" id="IPR036423">
    <property type="entry name" value="SOD-like_Cu/Zn_dom_sf"/>
</dbReference>
<dbReference type="SUPFAM" id="SSF49329">
    <property type="entry name" value="Cu,Zn superoxide dismutase-like"/>
    <property type="match status" value="1"/>
</dbReference>